<gene>
    <name evidence="1" type="primary">rpsM</name>
    <name type="ordered locus">Ssed_4297</name>
</gene>
<accession>A8G1C8</accession>
<name>RS13_SHESH</name>
<comment type="function">
    <text evidence="1">Located at the top of the head of the 30S subunit, it contacts several helices of the 16S rRNA. In the 70S ribosome it contacts the 23S rRNA (bridge B1a) and protein L5 of the 50S subunit (bridge B1b), connecting the 2 subunits; these bridges are implicated in subunit movement. Contacts the tRNAs in the A and P-sites.</text>
</comment>
<comment type="subunit">
    <text evidence="1">Part of the 30S ribosomal subunit. Forms a loose heterodimer with protein S19. Forms two bridges to the 50S subunit in the 70S ribosome.</text>
</comment>
<comment type="similarity">
    <text evidence="1">Belongs to the universal ribosomal protein uS13 family.</text>
</comment>
<sequence>MARIAGINIPDQKHTVIALTGIFGIGRTRARAICATTSIAEDAKIKELSEAQIDTLREAVAEYTVEGDLRREVSMNIKRLMDLGCYRGIRHRRSLPLRGQRTKTNARTRKGPRKPIRK</sequence>
<evidence type="ECO:0000255" key="1">
    <source>
        <dbReference type="HAMAP-Rule" id="MF_01315"/>
    </source>
</evidence>
<evidence type="ECO:0000256" key="2">
    <source>
        <dbReference type="SAM" id="MobiDB-lite"/>
    </source>
</evidence>
<evidence type="ECO:0000305" key="3"/>
<keyword id="KW-1185">Reference proteome</keyword>
<keyword id="KW-0687">Ribonucleoprotein</keyword>
<keyword id="KW-0689">Ribosomal protein</keyword>
<keyword id="KW-0694">RNA-binding</keyword>
<keyword id="KW-0699">rRNA-binding</keyword>
<keyword id="KW-0820">tRNA-binding</keyword>
<organism>
    <name type="scientific">Shewanella sediminis (strain HAW-EB3)</name>
    <dbReference type="NCBI Taxonomy" id="425104"/>
    <lineage>
        <taxon>Bacteria</taxon>
        <taxon>Pseudomonadati</taxon>
        <taxon>Pseudomonadota</taxon>
        <taxon>Gammaproteobacteria</taxon>
        <taxon>Alteromonadales</taxon>
        <taxon>Shewanellaceae</taxon>
        <taxon>Shewanella</taxon>
    </lineage>
</organism>
<reference key="1">
    <citation type="submission" date="2007-08" db="EMBL/GenBank/DDBJ databases">
        <title>Complete sequence of Shewanella sediminis HAW-EB3.</title>
        <authorList>
            <consortium name="US DOE Joint Genome Institute"/>
            <person name="Copeland A."/>
            <person name="Lucas S."/>
            <person name="Lapidus A."/>
            <person name="Barry K."/>
            <person name="Glavina del Rio T."/>
            <person name="Dalin E."/>
            <person name="Tice H."/>
            <person name="Pitluck S."/>
            <person name="Chertkov O."/>
            <person name="Brettin T."/>
            <person name="Bruce D."/>
            <person name="Detter J.C."/>
            <person name="Han C."/>
            <person name="Schmutz J."/>
            <person name="Larimer F."/>
            <person name="Land M."/>
            <person name="Hauser L."/>
            <person name="Kyrpides N."/>
            <person name="Kim E."/>
            <person name="Zhao J.-S."/>
            <person name="Richardson P."/>
        </authorList>
    </citation>
    <scope>NUCLEOTIDE SEQUENCE [LARGE SCALE GENOMIC DNA]</scope>
    <source>
        <strain>HAW-EB3</strain>
    </source>
</reference>
<proteinExistence type="inferred from homology"/>
<feature type="chain" id="PRO_1000086261" description="Small ribosomal subunit protein uS13">
    <location>
        <begin position="1"/>
        <end position="118"/>
    </location>
</feature>
<feature type="region of interest" description="Disordered" evidence="2">
    <location>
        <begin position="94"/>
        <end position="118"/>
    </location>
</feature>
<dbReference type="EMBL" id="CP000821">
    <property type="protein sequence ID" value="ABV38901.1"/>
    <property type="molecule type" value="Genomic_DNA"/>
</dbReference>
<dbReference type="RefSeq" id="WP_012144630.1">
    <property type="nucleotide sequence ID" value="NC_009831.1"/>
</dbReference>
<dbReference type="SMR" id="A8G1C8"/>
<dbReference type="STRING" id="425104.Ssed_4297"/>
<dbReference type="KEGG" id="sse:Ssed_4297"/>
<dbReference type="eggNOG" id="COG0099">
    <property type="taxonomic scope" value="Bacteria"/>
</dbReference>
<dbReference type="HOGENOM" id="CLU_103849_1_2_6"/>
<dbReference type="OrthoDB" id="9803610at2"/>
<dbReference type="Proteomes" id="UP000002015">
    <property type="component" value="Chromosome"/>
</dbReference>
<dbReference type="GO" id="GO:0005829">
    <property type="term" value="C:cytosol"/>
    <property type="evidence" value="ECO:0007669"/>
    <property type="project" value="TreeGrafter"/>
</dbReference>
<dbReference type="GO" id="GO:0015935">
    <property type="term" value="C:small ribosomal subunit"/>
    <property type="evidence" value="ECO:0007669"/>
    <property type="project" value="TreeGrafter"/>
</dbReference>
<dbReference type="GO" id="GO:0019843">
    <property type="term" value="F:rRNA binding"/>
    <property type="evidence" value="ECO:0007669"/>
    <property type="project" value="UniProtKB-UniRule"/>
</dbReference>
<dbReference type="GO" id="GO:0003735">
    <property type="term" value="F:structural constituent of ribosome"/>
    <property type="evidence" value="ECO:0007669"/>
    <property type="project" value="InterPro"/>
</dbReference>
<dbReference type="GO" id="GO:0000049">
    <property type="term" value="F:tRNA binding"/>
    <property type="evidence" value="ECO:0007669"/>
    <property type="project" value="UniProtKB-UniRule"/>
</dbReference>
<dbReference type="GO" id="GO:0006412">
    <property type="term" value="P:translation"/>
    <property type="evidence" value="ECO:0007669"/>
    <property type="project" value="UniProtKB-UniRule"/>
</dbReference>
<dbReference type="FunFam" id="1.10.8.50:FF:000001">
    <property type="entry name" value="30S ribosomal protein S13"/>
    <property type="match status" value="1"/>
</dbReference>
<dbReference type="FunFam" id="4.10.910.10:FF:000001">
    <property type="entry name" value="30S ribosomal protein S13"/>
    <property type="match status" value="1"/>
</dbReference>
<dbReference type="Gene3D" id="1.10.8.50">
    <property type="match status" value="1"/>
</dbReference>
<dbReference type="Gene3D" id="4.10.910.10">
    <property type="entry name" value="30s ribosomal protein s13, domain 2"/>
    <property type="match status" value="1"/>
</dbReference>
<dbReference type="HAMAP" id="MF_01315">
    <property type="entry name" value="Ribosomal_uS13"/>
    <property type="match status" value="1"/>
</dbReference>
<dbReference type="InterPro" id="IPR027437">
    <property type="entry name" value="Rbsml_uS13_C"/>
</dbReference>
<dbReference type="InterPro" id="IPR001892">
    <property type="entry name" value="Ribosomal_uS13"/>
</dbReference>
<dbReference type="InterPro" id="IPR010979">
    <property type="entry name" value="Ribosomal_uS13-like_H2TH"/>
</dbReference>
<dbReference type="InterPro" id="IPR019980">
    <property type="entry name" value="Ribosomal_uS13_bac-type"/>
</dbReference>
<dbReference type="InterPro" id="IPR018269">
    <property type="entry name" value="Ribosomal_uS13_CS"/>
</dbReference>
<dbReference type="NCBIfam" id="TIGR03631">
    <property type="entry name" value="uS13_bact"/>
    <property type="match status" value="1"/>
</dbReference>
<dbReference type="PANTHER" id="PTHR10871">
    <property type="entry name" value="30S RIBOSOMAL PROTEIN S13/40S RIBOSOMAL PROTEIN S18"/>
    <property type="match status" value="1"/>
</dbReference>
<dbReference type="PANTHER" id="PTHR10871:SF1">
    <property type="entry name" value="SMALL RIBOSOMAL SUBUNIT PROTEIN US13M"/>
    <property type="match status" value="1"/>
</dbReference>
<dbReference type="Pfam" id="PF00416">
    <property type="entry name" value="Ribosomal_S13"/>
    <property type="match status" value="1"/>
</dbReference>
<dbReference type="PIRSF" id="PIRSF002134">
    <property type="entry name" value="Ribosomal_S13"/>
    <property type="match status" value="1"/>
</dbReference>
<dbReference type="SUPFAM" id="SSF46946">
    <property type="entry name" value="S13-like H2TH domain"/>
    <property type="match status" value="1"/>
</dbReference>
<dbReference type="PROSITE" id="PS00646">
    <property type="entry name" value="RIBOSOMAL_S13_1"/>
    <property type="match status" value="1"/>
</dbReference>
<dbReference type="PROSITE" id="PS50159">
    <property type="entry name" value="RIBOSOMAL_S13_2"/>
    <property type="match status" value="1"/>
</dbReference>
<protein>
    <recommendedName>
        <fullName evidence="1">Small ribosomal subunit protein uS13</fullName>
    </recommendedName>
    <alternativeName>
        <fullName evidence="3">30S ribosomal protein S13</fullName>
    </alternativeName>
</protein>